<keyword id="KW-0067">ATP-binding</keyword>
<keyword id="KW-0963">Cytoplasm</keyword>
<keyword id="KW-0460">Magnesium</keyword>
<keyword id="KW-0479">Metal-binding</keyword>
<keyword id="KW-0547">Nucleotide-binding</keyword>
<keyword id="KW-1185">Reference proteome</keyword>
<keyword id="KW-0819">tRNA processing</keyword>
<accession>O86788</accession>
<dbReference type="EMBL" id="AL939121">
    <property type="protein sequence ID" value="CAA20403.1"/>
    <property type="molecule type" value="Genomic_DNA"/>
</dbReference>
<dbReference type="PIR" id="T35576">
    <property type="entry name" value="T35576"/>
</dbReference>
<dbReference type="RefSeq" id="NP_628905.1">
    <property type="nucleotide sequence ID" value="NC_003888.3"/>
</dbReference>
<dbReference type="SMR" id="O86788"/>
<dbReference type="FunCoup" id="O86788">
    <property type="interactions" value="83"/>
</dbReference>
<dbReference type="STRING" id="100226.gene:17762396"/>
<dbReference type="PaxDb" id="100226-SCO4747"/>
<dbReference type="KEGG" id="sco:SCO4747"/>
<dbReference type="PATRIC" id="fig|100226.15.peg.4819"/>
<dbReference type="eggNOG" id="COG0802">
    <property type="taxonomic scope" value="Bacteria"/>
</dbReference>
<dbReference type="HOGENOM" id="CLU_087829_1_1_11"/>
<dbReference type="InParanoid" id="O86788"/>
<dbReference type="OrthoDB" id="9800307at2"/>
<dbReference type="PhylomeDB" id="O86788"/>
<dbReference type="Proteomes" id="UP000001973">
    <property type="component" value="Chromosome"/>
</dbReference>
<dbReference type="GO" id="GO:0005737">
    <property type="term" value="C:cytoplasm"/>
    <property type="evidence" value="ECO:0007669"/>
    <property type="project" value="UniProtKB-SubCell"/>
</dbReference>
<dbReference type="GO" id="GO:0005524">
    <property type="term" value="F:ATP binding"/>
    <property type="evidence" value="ECO:0007669"/>
    <property type="project" value="UniProtKB-KW"/>
</dbReference>
<dbReference type="GO" id="GO:0046872">
    <property type="term" value="F:metal ion binding"/>
    <property type="evidence" value="ECO:0007669"/>
    <property type="project" value="UniProtKB-KW"/>
</dbReference>
<dbReference type="GO" id="GO:0002949">
    <property type="term" value="P:tRNA threonylcarbamoyladenosine modification"/>
    <property type="evidence" value="ECO:0000318"/>
    <property type="project" value="GO_Central"/>
</dbReference>
<dbReference type="FunFam" id="3.40.50.300:FF:001732">
    <property type="entry name" value="tRNA threonylcarbamoyladenosine biosynthesis protein TsaE"/>
    <property type="match status" value="1"/>
</dbReference>
<dbReference type="Gene3D" id="3.40.50.300">
    <property type="entry name" value="P-loop containing nucleotide triphosphate hydrolases"/>
    <property type="match status" value="1"/>
</dbReference>
<dbReference type="InterPro" id="IPR027417">
    <property type="entry name" value="P-loop_NTPase"/>
</dbReference>
<dbReference type="InterPro" id="IPR003442">
    <property type="entry name" value="T6A_TsaE"/>
</dbReference>
<dbReference type="NCBIfam" id="TIGR00150">
    <property type="entry name" value="T6A_YjeE"/>
    <property type="match status" value="1"/>
</dbReference>
<dbReference type="PANTHER" id="PTHR33540">
    <property type="entry name" value="TRNA THREONYLCARBAMOYLADENOSINE BIOSYNTHESIS PROTEIN TSAE"/>
    <property type="match status" value="1"/>
</dbReference>
<dbReference type="PANTHER" id="PTHR33540:SF2">
    <property type="entry name" value="TRNA THREONYLCARBAMOYLADENOSINE BIOSYNTHESIS PROTEIN TSAE"/>
    <property type="match status" value="1"/>
</dbReference>
<dbReference type="Pfam" id="PF02367">
    <property type="entry name" value="TsaE"/>
    <property type="match status" value="1"/>
</dbReference>
<dbReference type="SUPFAM" id="SSF52540">
    <property type="entry name" value="P-loop containing nucleoside triphosphate hydrolases"/>
    <property type="match status" value="1"/>
</dbReference>
<name>TSAE_STRCO</name>
<organism>
    <name type="scientific">Streptomyces coelicolor (strain ATCC BAA-471 / A3(2) / M145)</name>
    <dbReference type="NCBI Taxonomy" id="100226"/>
    <lineage>
        <taxon>Bacteria</taxon>
        <taxon>Bacillati</taxon>
        <taxon>Actinomycetota</taxon>
        <taxon>Actinomycetes</taxon>
        <taxon>Kitasatosporales</taxon>
        <taxon>Streptomycetaceae</taxon>
        <taxon>Streptomyces</taxon>
        <taxon>Streptomyces albidoflavus group</taxon>
    </lineage>
</organism>
<evidence type="ECO:0000250" key="1"/>
<evidence type="ECO:0000305" key="2"/>
<protein>
    <recommendedName>
        <fullName>tRNA threonylcarbamoyladenosine biosynthesis protein TsaE</fullName>
    </recommendedName>
    <alternativeName>
        <fullName>t(6)A37 threonylcarbamoyladenosine biosynthesis protein TsaE</fullName>
    </alternativeName>
</protein>
<feature type="chain" id="PRO_0000096218" description="tRNA threonylcarbamoyladenosine biosynthesis protein TsaE">
    <location>
        <begin position="1"/>
        <end position="148"/>
    </location>
</feature>
<feature type="binding site" evidence="1">
    <location>
        <begin position="25"/>
        <end position="30"/>
    </location>
    <ligand>
        <name>ATP</name>
        <dbReference type="ChEBI" id="CHEBI:30616"/>
    </ligand>
</feature>
<feature type="binding site" evidence="1">
    <location>
        <position position="29"/>
    </location>
    <ligand>
        <name>Mg(2+)</name>
        <dbReference type="ChEBI" id="CHEBI:18420"/>
    </ligand>
</feature>
<feature type="binding site" evidence="1">
    <location>
        <position position="97"/>
    </location>
    <ligand>
        <name>Mg(2+)</name>
        <dbReference type="ChEBI" id="CHEBI:18420"/>
    </ligand>
</feature>
<feature type="binding site" evidence="1">
    <location>
        <position position="125"/>
    </location>
    <ligand>
        <name>ATP</name>
        <dbReference type="ChEBI" id="CHEBI:30616"/>
    </ligand>
</feature>
<reference key="1">
    <citation type="journal article" date="2002" name="Nature">
        <title>Complete genome sequence of the model actinomycete Streptomyces coelicolor A3(2).</title>
        <authorList>
            <person name="Bentley S.D."/>
            <person name="Chater K.F."/>
            <person name="Cerdeno-Tarraga A.-M."/>
            <person name="Challis G.L."/>
            <person name="Thomson N.R."/>
            <person name="James K.D."/>
            <person name="Harris D.E."/>
            <person name="Quail M.A."/>
            <person name="Kieser H."/>
            <person name="Harper D."/>
            <person name="Bateman A."/>
            <person name="Brown S."/>
            <person name="Chandra G."/>
            <person name="Chen C.W."/>
            <person name="Collins M."/>
            <person name="Cronin A."/>
            <person name="Fraser A."/>
            <person name="Goble A."/>
            <person name="Hidalgo J."/>
            <person name="Hornsby T."/>
            <person name="Howarth S."/>
            <person name="Huang C.-H."/>
            <person name="Kieser T."/>
            <person name="Larke L."/>
            <person name="Murphy L.D."/>
            <person name="Oliver K."/>
            <person name="O'Neil S."/>
            <person name="Rabbinowitsch E."/>
            <person name="Rajandream M.A."/>
            <person name="Rutherford K.M."/>
            <person name="Rutter S."/>
            <person name="Seeger K."/>
            <person name="Saunders D."/>
            <person name="Sharp S."/>
            <person name="Squares R."/>
            <person name="Squares S."/>
            <person name="Taylor K."/>
            <person name="Warren T."/>
            <person name="Wietzorrek A."/>
            <person name="Woodward J.R."/>
            <person name="Barrell B.G."/>
            <person name="Parkhill J."/>
            <person name="Hopwood D.A."/>
        </authorList>
    </citation>
    <scope>NUCLEOTIDE SEQUENCE [LARGE SCALE GENOMIC DNA]</scope>
    <source>
        <strain>ATCC BAA-471 / A3(2) / M145</strain>
    </source>
</reference>
<proteinExistence type="inferred from homology"/>
<sequence length="148" mass="15755">MRELGRRLAKLLRAGDLVMLSGELGAGKTTLTRGLGEGLGVRGAVTSPTFVIARVHPSLGDGPPLVHVDAYRLSGGLDEMEDLDLDVSLSDSVIVVEWGEGKVEELTEDRLRLRIDRAVGDTADEVRHVTVTGLGERWATADVSVLAG</sequence>
<comment type="function">
    <text evidence="1">Required for the formation of a threonylcarbamoyl group on adenosine at position 37 (t(6)A37) in tRNAs that read codons beginning with adenine. Is involved in the transfer of the threonylcarbamoyl moiety of threonylcarbamoyl-AMP (TC-AMP) to the N6 group of A37, together with TsaD and TsaB. TsaE seems to play an indirect role in the t(6)A biosynthesis pathway, possibly in regulating the core enzymatic function of TsaD (By similarity).</text>
</comment>
<comment type="subcellular location">
    <subcellularLocation>
        <location evidence="1">Cytoplasm</location>
    </subcellularLocation>
</comment>
<comment type="similarity">
    <text evidence="2">Belongs to the TsaE family.</text>
</comment>
<gene>
    <name type="primary">tsaE</name>
    <name type="ordered locus">SCO4747</name>
    <name type="ORF">SC6G4.25</name>
</gene>